<sequence>MYFVNLLTTIIPILLAVAFLTLLERKFLGYMQLRKGPNIVGPYGLLQPITDAVKLFIKEPLQPLTSSLILFIIAPTLALTLALMMWIPLPMPHPLVNMNLSILFMLALSSLAVYAILWSGWASNSKYALIGALRAVAQTISYEVTLAIIILSVLLMNGSFTLSTLITTQEHIWLLLPSWPLAMMWFISTLAETNRAPFDLTEGESELVSGFNVEYAGGPFALFFLAEYANIIMMNALTTILFLGAHNNSLFPEMYTTNFMLKTLLFTTFFLWIRASYPRFRYDQLMHLLWKNFLPLTLVMCMWHITLPIILASIPPQT</sequence>
<gene>
    <name type="primary">MT-ND1</name>
    <name type="synonym">MTND1</name>
    <name type="synonym">NADH1</name>
    <name type="synonym">ND1</name>
</gene>
<geneLocation type="mitochondrion"/>
<evidence type="ECO:0000250" key="1"/>
<evidence type="ECO:0000255" key="2"/>
<evidence type="ECO:0000305" key="3"/>
<proteinExistence type="inferred from homology"/>
<protein>
    <recommendedName>
        <fullName>NADH-ubiquinone oxidoreductase chain 1</fullName>
        <ecNumber>7.1.1.2</ecNumber>
    </recommendedName>
    <alternativeName>
        <fullName>NADH dehydrogenase subunit 1</fullName>
    </alternativeName>
</protein>
<feature type="chain" id="PRO_0000117440" description="NADH-ubiquinone oxidoreductase chain 1">
    <location>
        <begin position="1"/>
        <end position="318"/>
    </location>
</feature>
<feature type="transmembrane region" description="Helical" evidence="2">
    <location>
        <begin position="3"/>
        <end position="23"/>
    </location>
</feature>
<feature type="transmembrane region" description="Helical" evidence="2">
    <location>
        <begin position="68"/>
        <end position="88"/>
    </location>
</feature>
<feature type="transmembrane region" description="Helical" evidence="2">
    <location>
        <begin position="102"/>
        <end position="122"/>
    </location>
</feature>
<feature type="transmembrane region" description="Helical" evidence="2">
    <location>
        <begin position="146"/>
        <end position="166"/>
    </location>
</feature>
<feature type="transmembrane region" description="Helical" evidence="2">
    <location>
        <begin position="171"/>
        <end position="191"/>
    </location>
</feature>
<feature type="transmembrane region" description="Helical" evidence="2">
    <location>
        <begin position="222"/>
        <end position="242"/>
    </location>
</feature>
<feature type="transmembrane region" description="Helical" evidence="2">
    <location>
        <begin position="253"/>
        <end position="273"/>
    </location>
</feature>
<feature type="transmembrane region" description="Helical" evidence="2">
    <location>
        <begin position="294"/>
        <end position="314"/>
    </location>
</feature>
<comment type="function">
    <text evidence="1">Core subunit of the mitochondrial membrane respiratory chain NADH dehydrogenase (Complex I) that is believed to belong to the minimal assembly required for catalysis. Complex I functions in the transfer of electrons from NADH to the respiratory chain. The immediate electron acceptor for the enzyme is believed to be ubiquinone (By similarity).</text>
</comment>
<comment type="catalytic activity">
    <reaction>
        <text>a ubiquinone + NADH + 5 H(+)(in) = a ubiquinol + NAD(+) + 4 H(+)(out)</text>
        <dbReference type="Rhea" id="RHEA:29091"/>
        <dbReference type="Rhea" id="RHEA-COMP:9565"/>
        <dbReference type="Rhea" id="RHEA-COMP:9566"/>
        <dbReference type="ChEBI" id="CHEBI:15378"/>
        <dbReference type="ChEBI" id="CHEBI:16389"/>
        <dbReference type="ChEBI" id="CHEBI:17976"/>
        <dbReference type="ChEBI" id="CHEBI:57540"/>
        <dbReference type="ChEBI" id="CHEBI:57945"/>
        <dbReference type="EC" id="7.1.1.2"/>
    </reaction>
</comment>
<comment type="subcellular location">
    <subcellularLocation>
        <location evidence="1">Mitochondrion inner membrane</location>
        <topology evidence="1">Multi-pass membrane protein</topology>
    </subcellularLocation>
</comment>
<comment type="similarity">
    <text evidence="3">Belongs to the complex I subunit 1 family.</text>
</comment>
<name>NU1M_NYCPV</name>
<organism>
    <name type="scientific">Nyctalus plancyi velutinus</name>
    <name type="common">Fine-haired noctule</name>
    <name type="synonym">Nyctalus velutinus</name>
    <dbReference type="NCBI Taxonomy" id="187011"/>
    <lineage>
        <taxon>Eukaryota</taxon>
        <taxon>Metazoa</taxon>
        <taxon>Chordata</taxon>
        <taxon>Craniata</taxon>
        <taxon>Vertebrata</taxon>
        <taxon>Euteleostomi</taxon>
        <taxon>Mammalia</taxon>
        <taxon>Eutheria</taxon>
        <taxon>Laurasiatheria</taxon>
        <taxon>Chiroptera</taxon>
        <taxon>Yangochiroptera</taxon>
        <taxon>Vespertilionidae</taxon>
        <taxon>Nyctalus</taxon>
    </lineage>
</organism>
<reference key="1">
    <citation type="journal article" date="2002" name="J. Mol. Evol.">
        <title>Intra- and interfamily relationships of Vespertilionidae inferred by various molecular markers including SINE insertion data.</title>
        <authorList>
            <person name="Kawai K."/>
            <person name="Nikaido M."/>
            <person name="Harada M."/>
            <person name="Matsumura S."/>
            <person name="Lin L.K."/>
            <person name="Wu Y."/>
            <person name="Hasegawa M."/>
            <person name="Okada N."/>
        </authorList>
    </citation>
    <scope>NUCLEOTIDE SEQUENCE [GENOMIC DNA]</scope>
</reference>
<accession>Q8M881</accession>
<keyword id="KW-0249">Electron transport</keyword>
<keyword id="KW-0472">Membrane</keyword>
<keyword id="KW-0496">Mitochondrion</keyword>
<keyword id="KW-0999">Mitochondrion inner membrane</keyword>
<keyword id="KW-0520">NAD</keyword>
<keyword id="KW-0679">Respiratory chain</keyword>
<keyword id="KW-1278">Translocase</keyword>
<keyword id="KW-0812">Transmembrane</keyword>
<keyword id="KW-1133">Transmembrane helix</keyword>
<keyword id="KW-0813">Transport</keyword>
<keyword id="KW-0830">Ubiquinone</keyword>
<dbReference type="EC" id="7.1.1.2"/>
<dbReference type="EMBL" id="AB079820">
    <property type="protein sequence ID" value="BAB92045.1"/>
    <property type="molecule type" value="Genomic_DNA"/>
</dbReference>
<dbReference type="SMR" id="Q8M881"/>
<dbReference type="GO" id="GO:0005743">
    <property type="term" value="C:mitochondrial inner membrane"/>
    <property type="evidence" value="ECO:0007669"/>
    <property type="project" value="UniProtKB-SubCell"/>
</dbReference>
<dbReference type="GO" id="GO:0008137">
    <property type="term" value="F:NADH dehydrogenase (ubiquinone) activity"/>
    <property type="evidence" value="ECO:0007669"/>
    <property type="project" value="UniProtKB-EC"/>
</dbReference>
<dbReference type="GO" id="GO:0009060">
    <property type="term" value="P:aerobic respiration"/>
    <property type="evidence" value="ECO:0007669"/>
    <property type="project" value="TreeGrafter"/>
</dbReference>
<dbReference type="HAMAP" id="MF_01350">
    <property type="entry name" value="NDH1_NuoH"/>
    <property type="match status" value="1"/>
</dbReference>
<dbReference type="InterPro" id="IPR001694">
    <property type="entry name" value="NADH_UbQ_OxRdtase_su1/FPO"/>
</dbReference>
<dbReference type="InterPro" id="IPR018086">
    <property type="entry name" value="NADH_UbQ_OxRdtase_su1_CS"/>
</dbReference>
<dbReference type="PANTHER" id="PTHR11432">
    <property type="entry name" value="NADH DEHYDROGENASE SUBUNIT 1"/>
    <property type="match status" value="1"/>
</dbReference>
<dbReference type="PANTHER" id="PTHR11432:SF3">
    <property type="entry name" value="NADH-UBIQUINONE OXIDOREDUCTASE CHAIN 1"/>
    <property type="match status" value="1"/>
</dbReference>
<dbReference type="Pfam" id="PF00146">
    <property type="entry name" value="NADHdh"/>
    <property type="match status" value="1"/>
</dbReference>
<dbReference type="PROSITE" id="PS00667">
    <property type="entry name" value="COMPLEX1_ND1_1"/>
    <property type="match status" value="1"/>
</dbReference>
<dbReference type="PROSITE" id="PS00668">
    <property type="entry name" value="COMPLEX1_ND1_2"/>
    <property type="match status" value="1"/>
</dbReference>